<reference key="1">
    <citation type="journal article" date="2008" name="J. Bacteriol.">
        <title>Genome sequence of a nephritogenic and highly transformable M49 strain of Streptococcus pyogenes.</title>
        <authorList>
            <person name="McShan W.M."/>
            <person name="Ferretti J.J."/>
            <person name="Karasawa T."/>
            <person name="Suvorov A.N."/>
            <person name="Lin S."/>
            <person name="Qin B."/>
            <person name="Jia H."/>
            <person name="Kenton S."/>
            <person name="Najar F."/>
            <person name="Wu H."/>
            <person name="Scott J."/>
            <person name="Roe B.A."/>
            <person name="Savic D.J."/>
        </authorList>
    </citation>
    <scope>NUCLEOTIDE SEQUENCE [LARGE SCALE GENOMIC DNA]</scope>
    <source>
        <strain>NZ131</strain>
    </source>
</reference>
<feature type="chain" id="PRO_1000135986" description="2,3-bisphosphoglycerate-dependent phosphoglycerate mutase">
    <location>
        <begin position="1"/>
        <end position="231"/>
    </location>
</feature>
<feature type="active site" description="Tele-phosphohistidine intermediate" evidence="1">
    <location>
        <position position="9"/>
    </location>
</feature>
<feature type="active site" description="Proton donor/acceptor" evidence="1">
    <location>
        <position position="87"/>
    </location>
</feature>
<feature type="binding site" evidence="1">
    <location>
        <begin position="8"/>
        <end position="15"/>
    </location>
    <ligand>
        <name>substrate</name>
    </ligand>
</feature>
<feature type="binding site" evidence="1">
    <location>
        <begin position="21"/>
        <end position="22"/>
    </location>
    <ligand>
        <name>substrate</name>
    </ligand>
</feature>
<feature type="binding site" evidence="1">
    <location>
        <position position="60"/>
    </location>
    <ligand>
        <name>substrate</name>
    </ligand>
</feature>
<feature type="binding site" evidence="1">
    <location>
        <begin position="87"/>
        <end position="90"/>
    </location>
    <ligand>
        <name>substrate</name>
    </ligand>
</feature>
<feature type="binding site" evidence="1">
    <location>
        <position position="98"/>
    </location>
    <ligand>
        <name>substrate</name>
    </ligand>
</feature>
<feature type="binding site" evidence="1">
    <location>
        <begin position="114"/>
        <end position="115"/>
    </location>
    <ligand>
        <name>substrate</name>
    </ligand>
</feature>
<feature type="binding site" evidence="1">
    <location>
        <begin position="183"/>
        <end position="184"/>
    </location>
    <ligand>
        <name>substrate</name>
    </ligand>
</feature>
<feature type="site" description="Transition state stabilizer" evidence="1">
    <location>
        <position position="182"/>
    </location>
</feature>
<evidence type="ECO:0000255" key="1">
    <source>
        <dbReference type="HAMAP-Rule" id="MF_01039"/>
    </source>
</evidence>
<proteinExistence type="inferred from homology"/>
<protein>
    <recommendedName>
        <fullName evidence="1">2,3-bisphosphoglycerate-dependent phosphoglycerate mutase</fullName>
        <shortName evidence="1">BPG-dependent PGAM</shortName>
        <shortName evidence="1">PGAM</shortName>
        <shortName evidence="1">Phosphoglyceromutase</shortName>
        <shortName evidence="1">dPGM</shortName>
        <ecNumber evidence="1">5.4.2.11</ecNumber>
    </recommendedName>
</protein>
<gene>
    <name evidence="1" type="primary">gpmA</name>
    <name type="ordered locus">Spy49_1143c</name>
</gene>
<name>GPMA_STRPZ</name>
<sequence>MVKLVFARHGESEWNKANLFTGWADVDLSEKGTQQAIDAGKLIKEAGIEFDLAFTSVLTRAIKTTNLALENAGQLWVPTEKSWRLNERHYGALTGKNKAEAAEQFGDEQVHIWRRSYDVLPPAMAKDDEYSAHKDRRYADLDPALIPDAENLKVTLERAMPYWEEKIAPALLDGKNVFVGAHGNSIRALVKHIKGLSDDEIMDVEIPNFPPLVFELDEKLNIVKEYYLGGE</sequence>
<dbReference type="EC" id="5.4.2.11" evidence="1"/>
<dbReference type="EMBL" id="CP000829">
    <property type="protein sequence ID" value="ACI61431.1"/>
    <property type="molecule type" value="Genomic_DNA"/>
</dbReference>
<dbReference type="SMR" id="B5XM69"/>
<dbReference type="KEGG" id="soz:Spy49_1143c"/>
<dbReference type="HOGENOM" id="CLU_033323_1_5_9"/>
<dbReference type="UniPathway" id="UPA00109">
    <property type="reaction ID" value="UER00186"/>
</dbReference>
<dbReference type="Proteomes" id="UP000001039">
    <property type="component" value="Chromosome"/>
</dbReference>
<dbReference type="GO" id="GO:0004619">
    <property type="term" value="F:phosphoglycerate mutase activity"/>
    <property type="evidence" value="ECO:0007669"/>
    <property type="project" value="UniProtKB-EC"/>
</dbReference>
<dbReference type="GO" id="GO:0006094">
    <property type="term" value="P:gluconeogenesis"/>
    <property type="evidence" value="ECO:0007669"/>
    <property type="project" value="UniProtKB-UniRule"/>
</dbReference>
<dbReference type="GO" id="GO:0006096">
    <property type="term" value="P:glycolytic process"/>
    <property type="evidence" value="ECO:0007669"/>
    <property type="project" value="UniProtKB-UniRule"/>
</dbReference>
<dbReference type="CDD" id="cd07067">
    <property type="entry name" value="HP_PGM_like"/>
    <property type="match status" value="1"/>
</dbReference>
<dbReference type="FunFam" id="3.40.50.1240:FF:000003">
    <property type="entry name" value="2,3-bisphosphoglycerate-dependent phosphoglycerate mutase"/>
    <property type="match status" value="1"/>
</dbReference>
<dbReference type="Gene3D" id="3.40.50.1240">
    <property type="entry name" value="Phosphoglycerate mutase-like"/>
    <property type="match status" value="1"/>
</dbReference>
<dbReference type="HAMAP" id="MF_01039">
    <property type="entry name" value="PGAM_GpmA"/>
    <property type="match status" value="1"/>
</dbReference>
<dbReference type="InterPro" id="IPR013078">
    <property type="entry name" value="His_Pase_superF_clade-1"/>
</dbReference>
<dbReference type="InterPro" id="IPR029033">
    <property type="entry name" value="His_PPase_superfam"/>
</dbReference>
<dbReference type="InterPro" id="IPR005952">
    <property type="entry name" value="Phosphogly_mut1"/>
</dbReference>
<dbReference type="NCBIfam" id="TIGR01258">
    <property type="entry name" value="pgm_1"/>
    <property type="match status" value="1"/>
</dbReference>
<dbReference type="NCBIfam" id="NF010713">
    <property type="entry name" value="PRK14115.1"/>
    <property type="match status" value="1"/>
</dbReference>
<dbReference type="NCBIfam" id="NF010715">
    <property type="entry name" value="PRK14117.1"/>
    <property type="match status" value="1"/>
</dbReference>
<dbReference type="PANTHER" id="PTHR11931">
    <property type="entry name" value="PHOSPHOGLYCERATE MUTASE"/>
    <property type="match status" value="1"/>
</dbReference>
<dbReference type="Pfam" id="PF00300">
    <property type="entry name" value="His_Phos_1"/>
    <property type="match status" value="1"/>
</dbReference>
<dbReference type="PIRSF" id="PIRSF000709">
    <property type="entry name" value="6PFK_2-Ptase"/>
    <property type="match status" value="1"/>
</dbReference>
<dbReference type="SMART" id="SM00855">
    <property type="entry name" value="PGAM"/>
    <property type="match status" value="1"/>
</dbReference>
<dbReference type="SUPFAM" id="SSF53254">
    <property type="entry name" value="Phosphoglycerate mutase-like"/>
    <property type="match status" value="1"/>
</dbReference>
<accession>B5XM69</accession>
<keyword id="KW-0312">Gluconeogenesis</keyword>
<keyword id="KW-0324">Glycolysis</keyword>
<keyword id="KW-0413">Isomerase</keyword>
<organism>
    <name type="scientific">Streptococcus pyogenes serotype M49 (strain NZ131)</name>
    <dbReference type="NCBI Taxonomy" id="471876"/>
    <lineage>
        <taxon>Bacteria</taxon>
        <taxon>Bacillati</taxon>
        <taxon>Bacillota</taxon>
        <taxon>Bacilli</taxon>
        <taxon>Lactobacillales</taxon>
        <taxon>Streptococcaceae</taxon>
        <taxon>Streptococcus</taxon>
    </lineage>
</organism>
<comment type="function">
    <text evidence="1">Catalyzes the interconversion of 2-phosphoglycerate and 3-phosphoglycerate.</text>
</comment>
<comment type="catalytic activity">
    <reaction evidence="1">
        <text>(2R)-2-phosphoglycerate = (2R)-3-phosphoglycerate</text>
        <dbReference type="Rhea" id="RHEA:15901"/>
        <dbReference type="ChEBI" id="CHEBI:58272"/>
        <dbReference type="ChEBI" id="CHEBI:58289"/>
        <dbReference type="EC" id="5.4.2.11"/>
    </reaction>
</comment>
<comment type="pathway">
    <text evidence="1">Carbohydrate degradation; glycolysis; pyruvate from D-glyceraldehyde 3-phosphate: step 3/5.</text>
</comment>
<comment type="similarity">
    <text evidence="1">Belongs to the phosphoglycerate mutase family. BPG-dependent PGAM subfamily.</text>
</comment>